<name>SWAHD_MOUSE</name>
<sequence>MAQALEDGNPLPKASNRPAESEAPSDPQIKDNHCLGRYKVQAVRDSANLSQERIFHSALTVSGASWARRRGELRELLGLQGAAPAGWLSEEHLEPAVPGSRRSSGQGSSRVCLEPREHAWILAAAECRFEVLLEMLEAEPSLLMREDPITGYSVLHWLAKHGRHEELILLHDFARRRGLPFDVSAPGSGGLTPLHLAALQGHDMVIKVLVGALGADPSRRDHSGNRPCHYLRPDASLNLRELSGAEEWEIERDRKRENANNNSSRTTTTTTTTSRWLKRTPSASCIKSTGVHYKEASQPVKEKKASSTQEGQGRCLRRYLFPFTQNR</sequence>
<evidence type="ECO:0000256" key="1">
    <source>
        <dbReference type="SAM" id="MobiDB-lite"/>
    </source>
</evidence>
<evidence type="ECO:0000305" key="2"/>
<proteinExistence type="evidence at transcript level"/>
<gene>
    <name type="primary">Sowahd</name>
    <name type="synonym">Ankrd58</name>
</gene>
<accession>Q8BY98</accession>
<comment type="similarity">
    <text evidence="2">Belongs to the SOWAH family.</text>
</comment>
<reference key="1">
    <citation type="journal article" date="2005" name="Science">
        <title>The transcriptional landscape of the mammalian genome.</title>
        <authorList>
            <person name="Carninci P."/>
            <person name="Kasukawa T."/>
            <person name="Katayama S."/>
            <person name="Gough J."/>
            <person name="Frith M.C."/>
            <person name="Maeda N."/>
            <person name="Oyama R."/>
            <person name="Ravasi T."/>
            <person name="Lenhard B."/>
            <person name="Wells C."/>
            <person name="Kodzius R."/>
            <person name="Shimokawa K."/>
            <person name="Bajic V.B."/>
            <person name="Brenner S.E."/>
            <person name="Batalov S."/>
            <person name="Forrest A.R."/>
            <person name="Zavolan M."/>
            <person name="Davis M.J."/>
            <person name="Wilming L.G."/>
            <person name="Aidinis V."/>
            <person name="Allen J.E."/>
            <person name="Ambesi-Impiombato A."/>
            <person name="Apweiler R."/>
            <person name="Aturaliya R.N."/>
            <person name="Bailey T.L."/>
            <person name="Bansal M."/>
            <person name="Baxter L."/>
            <person name="Beisel K.W."/>
            <person name="Bersano T."/>
            <person name="Bono H."/>
            <person name="Chalk A.M."/>
            <person name="Chiu K.P."/>
            <person name="Choudhary V."/>
            <person name="Christoffels A."/>
            <person name="Clutterbuck D.R."/>
            <person name="Crowe M.L."/>
            <person name="Dalla E."/>
            <person name="Dalrymple B.P."/>
            <person name="de Bono B."/>
            <person name="Della Gatta G."/>
            <person name="di Bernardo D."/>
            <person name="Down T."/>
            <person name="Engstrom P."/>
            <person name="Fagiolini M."/>
            <person name="Faulkner G."/>
            <person name="Fletcher C.F."/>
            <person name="Fukushima T."/>
            <person name="Furuno M."/>
            <person name="Futaki S."/>
            <person name="Gariboldi M."/>
            <person name="Georgii-Hemming P."/>
            <person name="Gingeras T.R."/>
            <person name="Gojobori T."/>
            <person name="Green R.E."/>
            <person name="Gustincich S."/>
            <person name="Harbers M."/>
            <person name="Hayashi Y."/>
            <person name="Hensch T.K."/>
            <person name="Hirokawa N."/>
            <person name="Hill D."/>
            <person name="Huminiecki L."/>
            <person name="Iacono M."/>
            <person name="Ikeo K."/>
            <person name="Iwama A."/>
            <person name="Ishikawa T."/>
            <person name="Jakt M."/>
            <person name="Kanapin A."/>
            <person name="Katoh M."/>
            <person name="Kawasawa Y."/>
            <person name="Kelso J."/>
            <person name="Kitamura H."/>
            <person name="Kitano H."/>
            <person name="Kollias G."/>
            <person name="Krishnan S.P."/>
            <person name="Kruger A."/>
            <person name="Kummerfeld S.K."/>
            <person name="Kurochkin I.V."/>
            <person name="Lareau L.F."/>
            <person name="Lazarevic D."/>
            <person name="Lipovich L."/>
            <person name="Liu J."/>
            <person name="Liuni S."/>
            <person name="McWilliam S."/>
            <person name="Madan Babu M."/>
            <person name="Madera M."/>
            <person name="Marchionni L."/>
            <person name="Matsuda H."/>
            <person name="Matsuzawa S."/>
            <person name="Miki H."/>
            <person name="Mignone F."/>
            <person name="Miyake S."/>
            <person name="Morris K."/>
            <person name="Mottagui-Tabar S."/>
            <person name="Mulder N."/>
            <person name="Nakano N."/>
            <person name="Nakauchi H."/>
            <person name="Ng P."/>
            <person name="Nilsson R."/>
            <person name="Nishiguchi S."/>
            <person name="Nishikawa S."/>
            <person name="Nori F."/>
            <person name="Ohara O."/>
            <person name="Okazaki Y."/>
            <person name="Orlando V."/>
            <person name="Pang K.C."/>
            <person name="Pavan W.J."/>
            <person name="Pavesi G."/>
            <person name="Pesole G."/>
            <person name="Petrovsky N."/>
            <person name="Piazza S."/>
            <person name="Reed J."/>
            <person name="Reid J.F."/>
            <person name="Ring B.Z."/>
            <person name="Ringwald M."/>
            <person name="Rost B."/>
            <person name="Ruan Y."/>
            <person name="Salzberg S.L."/>
            <person name="Sandelin A."/>
            <person name="Schneider C."/>
            <person name="Schoenbach C."/>
            <person name="Sekiguchi K."/>
            <person name="Semple C.A."/>
            <person name="Seno S."/>
            <person name="Sessa L."/>
            <person name="Sheng Y."/>
            <person name="Shibata Y."/>
            <person name="Shimada H."/>
            <person name="Shimada K."/>
            <person name="Silva D."/>
            <person name="Sinclair B."/>
            <person name="Sperling S."/>
            <person name="Stupka E."/>
            <person name="Sugiura K."/>
            <person name="Sultana R."/>
            <person name="Takenaka Y."/>
            <person name="Taki K."/>
            <person name="Tammoja K."/>
            <person name="Tan S.L."/>
            <person name="Tang S."/>
            <person name="Taylor M.S."/>
            <person name="Tegner J."/>
            <person name="Teichmann S.A."/>
            <person name="Ueda H.R."/>
            <person name="van Nimwegen E."/>
            <person name="Verardo R."/>
            <person name="Wei C.L."/>
            <person name="Yagi K."/>
            <person name="Yamanishi H."/>
            <person name="Zabarovsky E."/>
            <person name="Zhu S."/>
            <person name="Zimmer A."/>
            <person name="Hide W."/>
            <person name="Bult C."/>
            <person name="Grimmond S.M."/>
            <person name="Teasdale R.D."/>
            <person name="Liu E.T."/>
            <person name="Brusic V."/>
            <person name="Quackenbush J."/>
            <person name="Wahlestedt C."/>
            <person name="Mattick J.S."/>
            <person name="Hume D.A."/>
            <person name="Kai C."/>
            <person name="Sasaki D."/>
            <person name="Tomaru Y."/>
            <person name="Fukuda S."/>
            <person name="Kanamori-Katayama M."/>
            <person name="Suzuki M."/>
            <person name="Aoki J."/>
            <person name="Arakawa T."/>
            <person name="Iida J."/>
            <person name="Imamura K."/>
            <person name="Itoh M."/>
            <person name="Kato T."/>
            <person name="Kawaji H."/>
            <person name="Kawagashira N."/>
            <person name="Kawashima T."/>
            <person name="Kojima M."/>
            <person name="Kondo S."/>
            <person name="Konno H."/>
            <person name="Nakano K."/>
            <person name="Ninomiya N."/>
            <person name="Nishio T."/>
            <person name="Okada M."/>
            <person name="Plessy C."/>
            <person name="Shibata K."/>
            <person name="Shiraki T."/>
            <person name="Suzuki S."/>
            <person name="Tagami M."/>
            <person name="Waki K."/>
            <person name="Watahiki A."/>
            <person name="Okamura-Oho Y."/>
            <person name="Suzuki H."/>
            <person name="Kawai J."/>
            <person name="Hayashizaki Y."/>
        </authorList>
    </citation>
    <scope>NUCLEOTIDE SEQUENCE [LARGE SCALE MRNA]</scope>
    <source>
        <strain>C57BL/6J</strain>
        <tissue>Thymus</tissue>
    </source>
</reference>
<reference key="2">
    <citation type="journal article" date="2009" name="PLoS Biol.">
        <title>Lineage-specific biology revealed by a finished genome assembly of the mouse.</title>
        <authorList>
            <person name="Church D.M."/>
            <person name="Goodstadt L."/>
            <person name="Hillier L.W."/>
            <person name="Zody M.C."/>
            <person name="Goldstein S."/>
            <person name="She X."/>
            <person name="Bult C.J."/>
            <person name="Agarwala R."/>
            <person name="Cherry J.L."/>
            <person name="DiCuccio M."/>
            <person name="Hlavina W."/>
            <person name="Kapustin Y."/>
            <person name="Meric P."/>
            <person name="Maglott D."/>
            <person name="Birtle Z."/>
            <person name="Marques A.C."/>
            <person name="Graves T."/>
            <person name="Zhou S."/>
            <person name="Teague B."/>
            <person name="Potamousis K."/>
            <person name="Churas C."/>
            <person name="Place M."/>
            <person name="Herschleb J."/>
            <person name="Runnheim R."/>
            <person name="Forrest D."/>
            <person name="Amos-Landgraf J."/>
            <person name="Schwartz D.C."/>
            <person name="Cheng Z."/>
            <person name="Lindblad-Toh K."/>
            <person name="Eichler E.E."/>
            <person name="Ponting C.P."/>
        </authorList>
    </citation>
    <scope>NUCLEOTIDE SEQUENCE [LARGE SCALE GENOMIC DNA]</scope>
    <source>
        <strain>C57BL/6J</strain>
    </source>
</reference>
<reference key="3">
    <citation type="journal article" date="2004" name="Genome Res.">
        <title>The status, quality, and expansion of the NIH full-length cDNA project: the Mammalian Gene Collection (MGC).</title>
        <authorList>
            <consortium name="The MGC Project Team"/>
        </authorList>
    </citation>
    <scope>NUCLEOTIDE SEQUENCE [LARGE SCALE MRNA]</scope>
</reference>
<organism>
    <name type="scientific">Mus musculus</name>
    <name type="common">Mouse</name>
    <dbReference type="NCBI Taxonomy" id="10090"/>
    <lineage>
        <taxon>Eukaryota</taxon>
        <taxon>Metazoa</taxon>
        <taxon>Chordata</taxon>
        <taxon>Craniata</taxon>
        <taxon>Vertebrata</taxon>
        <taxon>Euteleostomi</taxon>
        <taxon>Mammalia</taxon>
        <taxon>Eutheria</taxon>
        <taxon>Euarchontoglires</taxon>
        <taxon>Glires</taxon>
        <taxon>Rodentia</taxon>
        <taxon>Myomorpha</taxon>
        <taxon>Muroidea</taxon>
        <taxon>Muridae</taxon>
        <taxon>Murinae</taxon>
        <taxon>Mus</taxon>
        <taxon>Mus</taxon>
    </lineage>
</organism>
<feature type="chain" id="PRO_0000315706" description="Ankyrin repeat domain-containing protein SOWAHD">
    <location>
        <begin position="1"/>
        <end position="327"/>
    </location>
</feature>
<feature type="repeat" description="ANK 1">
    <location>
        <begin position="112"/>
        <end position="141"/>
    </location>
</feature>
<feature type="repeat" description="ANK 2">
    <location>
        <begin position="147"/>
        <end position="162"/>
    </location>
</feature>
<feature type="repeat" description="ANK 3">
    <location>
        <begin position="186"/>
        <end position="216"/>
    </location>
</feature>
<feature type="region of interest" description="Disordered" evidence="1">
    <location>
        <begin position="1"/>
        <end position="31"/>
    </location>
</feature>
<feature type="region of interest" description="Disordered" evidence="1">
    <location>
        <begin position="251"/>
        <end position="311"/>
    </location>
</feature>
<feature type="compositionally biased region" description="Low complexity" evidence="1">
    <location>
        <begin position="260"/>
        <end position="275"/>
    </location>
</feature>
<feature type="compositionally biased region" description="Basic and acidic residues" evidence="1">
    <location>
        <begin position="292"/>
        <end position="305"/>
    </location>
</feature>
<protein>
    <recommendedName>
        <fullName>Ankyrin repeat domain-containing protein SOWAHD</fullName>
    </recommendedName>
    <alternativeName>
        <fullName>Ankyrin repeat domain-containing protein 58</fullName>
    </alternativeName>
    <alternativeName>
        <fullName>Protein sosondowah homolog D</fullName>
    </alternativeName>
</protein>
<dbReference type="EMBL" id="AK041485">
    <property type="protein sequence ID" value="BAC30959.1"/>
    <property type="molecule type" value="mRNA"/>
</dbReference>
<dbReference type="EMBL" id="AL589767">
    <property type="status" value="NOT_ANNOTATED_CDS"/>
    <property type="molecule type" value="Genomic_DNA"/>
</dbReference>
<dbReference type="EMBL" id="BC107372">
    <property type="protein sequence ID" value="AAI07373.1"/>
    <property type="molecule type" value="mRNA"/>
</dbReference>
<dbReference type="EMBL" id="BC107373">
    <property type="protein sequence ID" value="AAI07374.1"/>
    <property type="molecule type" value="mRNA"/>
</dbReference>
<dbReference type="CCDS" id="CCDS30067.1"/>
<dbReference type="RefSeq" id="NP_776140.1">
    <property type="nucleotide sequence ID" value="NM_173779.4"/>
</dbReference>
<dbReference type="SMR" id="Q8BY98"/>
<dbReference type="FunCoup" id="Q8BY98">
    <property type="interactions" value="51"/>
</dbReference>
<dbReference type="IntAct" id="Q8BY98">
    <property type="interactions" value="1"/>
</dbReference>
<dbReference type="iPTMnet" id="Q8BY98"/>
<dbReference type="PhosphoSitePlus" id="Q8BY98"/>
<dbReference type="PaxDb" id="10090-ENSMUSP00000058152"/>
<dbReference type="ProteomicsDB" id="258783"/>
<dbReference type="Antibodypedia" id="56549">
    <property type="antibodies" value="71 antibodies from 14 providers"/>
</dbReference>
<dbReference type="Ensembl" id="ENSMUST00000060057.2">
    <property type="protein sequence ID" value="ENSMUSP00000058152.2"/>
    <property type="gene ID" value="ENSMUSG00000044400.2"/>
</dbReference>
<dbReference type="GeneID" id="245381"/>
<dbReference type="KEGG" id="mmu:245381"/>
<dbReference type="UCSC" id="uc009syb.1">
    <property type="organism name" value="mouse"/>
</dbReference>
<dbReference type="AGR" id="MGI:3045274"/>
<dbReference type="CTD" id="347454"/>
<dbReference type="MGI" id="MGI:3045274">
    <property type="gene designation" value="Sowahd"/>
</dbReference>
<dbReference type="VEuPathDB" id="HostDB:ENSMUSG00000044400"/>
<dbReference type="eggNOG" id="ENOG502QPPI">
    <property type="taxonomic scope" value="Eukaryota"/>
</dbReference>
<dbReference type="GeneTree" id="ENSGT00950000183003"/>
<dbReference type="HOGENOM" id="CLU_083908_0_0_1"/>
<dbReference type="InParanoid" id="Q8BY98"/>
<dbReference type="OMA" id="LFPFTQN"/>
<dbReference type="OrthoDB" id="60433at2759"/>
<dbReference type="PhylomeDB" id="Q8BY98"/>
<dbReference type="TreeFam" id="TF331362"/>
<dbReference type="BioGRID-ORCS" id="245381">
    <property type="hits" value="2 hits in 77 CRISPR screens"/>
</dbReference>
<dbReference type="PRO" id="PR:Q8BY98"/>
<dbReference type="Proteomes" id="UP000000589">
    <property type="component" value="Chromosome X"/>
</dbReference>
<dbReference type="RNAct" id="Q8BY98">
    <property type="molecule type" value="protein"/>
</dbReference>
<dbReference type="Bgee" id="ENSMUSG00000044400">
    <property type="expression patterns" value="Expressed in mesodermal cell in embryo and 10 other cell types or tissues"/>
</dbReference>
<dbReference type="Gene3D" id="1.25.40.20">
    <property type="entry name" value="Ankyrin repeat-containing domain"/>
    <property type="match status" value="1"/>
</dbReference>
<dbReference type="InterPro" id="IPR002110">
    <property type="entry name" value="Ankyrin_rpt"/>
</dbReference>
<dbReference type="InterPro" id="IPR036770">
    <property type="entry name" value="Ankyrin_rpt-contain_sf"/>
</dbReference>
<dbReference type="PANTHER" id="PTHR14491:SF8">
    <property type="entry name" value="ANKYRIN REPEAT DOMAIN-CONTAINING PROTEIN SOWAHD"/>
    <property type="match status" value="1"/>
</dbReference>
<dbReference type="PANTHER" id="PTHR14491">
    <property type="entry name" value="SOSONDOWAH, ISOFORM G"/>
    <property type="match status" value="1"/>
</dbReference>
<dbReference type="Pfam" id="PF12796">
    <property type="entry name" value="Ank_2"/>
    <property type="match status" value="1"/>
</dbReference>
<dbReference type="SMART" id="SM00248">
    <property type="entry name" value="ANK"/>
    <property type="match status" value="2"/>
</dbReference>
<dbReference type="SUPFAM" id="SSF48403">
    <property type="entry name" value="Ankyrin repeat"/>
    <property type="match status" value="1"/>
</dbReference>
<dbReference type="PROSITE" id="PS50297">
    <property type="entry name" value="ANK_REP_REGION"/>
    <property type="match status" value="1"/>
</dbReference>
<dbReference type="PROSITE" id="PS50088">
    <property type="entry name" value="ANK_REPEAT"/>
    <property type="match status" value="1"/>
</dbReference>
<keyword id="KW-0040">ANK repeat</keyword>
<keyword id="KW-1185">Reference proteome</keyword>
<keyword id="KW-0677">Repeat</keyword>